<gene>
    <name evidence="4" type="primary">pelA</name>
    <name type="ordered locus">TM_0433</name>
</gene>
<protein>
    <recommendedName>
        <fullName>Pectate trisaccharide-lyase</fullName>
        <ecNumber>4.2.2.22</ecNumber>
    </recommendedName>
    <alternativeName>
        <fullName evidence="4 6">Pectate lyase A</fullName>
        <shortName evidence="4">PelA</shortName>
    </alternativeName>
</protein>
<comment type="function">
    <text evidence="3">Cleaves unsaturated trigalacturonate from pectin. Activity is highest towards polygalacturonic acid, activity on methylated pectins decreases with an increasing degree of methylation.</text>
</comment>
<comment type="catalytic activity">
    <reaction evidence="3">
        <text>eliminative cleavage of unsaturated trigalacturonate as the major product from the reducing end of polygalacturonic acid/pectate.</text>
        <dbReference type="EC" id="4.2.2.22"/>
    </reaction>
</comment>
<comment type="cofactor">
    <cofactor evidence="3">
        <name>Ca(2+)</name>
        <dbReference type="ChEBI" id="CHEBI:29108"/>
    </cofactor>
</comment>
<comment type="activity regulation">
    <text evidence="3">Completely inactivated by EGTA.</text>
</comment>
<comment type="biophysicochemical properties">
    <kinetics>
        <KM evidence="3">0.6 mM for polygalacturonic acid</KM>
    </kinetics>
    <phDependence>
        <text evidence="3">Optimum pH is 9.0.</text>
    </phDependence>
    <temperatureDependence>
        <text evidence="3">Optimum temperature is 90 degrees Celsius. Half-life in the presence of 0.6 mM CaCl(2) is 110 minutes at 95 degrees Celsius and 15 minutes at 100 degrees Celsius. Half-life in the absence of CaCl(2) is 5 minutes at 90 degrees Celsius.</text>
    </temperatureDependence>
</comment>
<comment type="subunit">
    <text evidence="3">Homotetramer.</text>
</comment>
<comment type="subcellular location">
    <subcellularLocation>
        <location evidence="3">Secreted</location>
    </subcellularLocation>
</comment>
<comment type="similarity">
    <text evidence="2">Belongs to the polysaccharide lyase 1 family.</text>
</comment>
<accession>Q9WYR4</accession>
<dbReference type="EC" id="4.2.2.22"/>
<dbReference type="EMBL" id="AE000512">
    <property type="protein sequence ID" value="AAD35518.1"/>
    <property type="molecule type" value="Genomic_DNA"/>
</dbReference>
<dbReference type="PIR" id="D72376">
    <property type="entry name" value="D72376"/>
</dbReference>
<dbReference type="RefSeq" id="NP_228243.1">
    <property type="nucleotide sequence ID" value="NC_000853.1"/>
</dbReference>
<dbReference type="RefSeq" id="WP_010865117.1">
    <property type="nucleotide sequence ID" value="NC_000853.1"/>
</dbReference>
<dbReference type="PDB" id="3ZSC">
    <property type="method" value="X-ray"/>
    <property type="resolution" value="1.94 A"/>
    <property type="chains" value="A=28-367"/>
</dbReference>
<dbReference type="PDBsum" id="3ZSC"/>
<dbReference type="SMR" id="Q9WYR4"/>
<dbReference type="FunCoup" id="Q9WYR4">
    <property type="interactions" value="25"/>
</dbReference>
<dbReference type="STRING" id="243274.TM_0433"/>
<dbReference type="CAZy" id="PL1">
    <property type="family name" value="Polysaccharide Lyase Family 1"/>
</dbReference>
<dbReference type="PaxDb" id="243274-THEMA_02560"/>
<dbReference type="EnsemblBacteria" id="AAD35518">
    <property type="protein sequence ID" value="AAD35518"/>
    <property type="gene ID" value="TM_0433"/>
</dbReference>
<dbReference type="KEGG" id="tma:TM0433"/>
<dbReference type="PATRIC" id="fig|243274.5.peg.439"/>
<dbReference type="eggNOG" id="COG3866">
    <property type="taxonomic scope" value="Bacteria"/>
</dbReference>
<dbReference type="InParanoid" id="Q9WYR4"/>
<dbReference type="OrthoDB" id="148600at2"/>
<dbReference type="BioCyc" id="MetaCyc:MONOMER-17962"/>
<dbReference type="BRENDA" id="4.2.2.2">
    <property type="organism ID" value="6331"/>
</dbReference>
<dbReference type="BRENDA" id="4.2.2.22">
    <property type="organism ID" value="6331"/>
</dbReference>
<dbReference type="EvolutionaryTrace" id="Q9WYR4"/>
<dbReference type="Proteomes" id="UP000008183">
    <property type="component" value="Chromosome"/>
</dbReference>
<dbReference type="GO" id="GO:0005576">
    <property type="term" value="C:extracellular region"/>
    <property type="evidence" value="ECO:0007669"/>
    <property type="project" value="UniProtKB-SubCell"/>
</dbReference>
<dbReference type="GO" id="GO:0046872">
    <property type="term" value="F:metal ion binding"/>
    <property type="evidence" value="ECO:0007669"/>
    <property type="project" value="UniProtKB-KW"/>
</dbReference>
<dbReference type="GO" id="GO:0030570">
    <property type="term" value="F:pectate lyase activity"/>
    <property type="evidence" value="ECO:0007669"/>
    <property type="project" value="InterPro"/>
</dbReference>
<dbReference type="GO" id="GO:0071555">
    <property type="term" value="P:cell wall organization"/>
    <property type="evidence" value="ECO:0007669"/>
    <property type="project" value="UniProtKB-KW"/>
</dbReference>
<dbReference type="GO" id="GO:0000272">
    <property type="term" value="P:polysaccharide catabolic process"/>
    <property type="evidence" value="ECO:0007669"/>
    <property type="project" value="UniProtKB-KW"/>
</dbReference>
<dbReference type="Gene3D" id="2.160.20.10">
    <property type="entry name" value="Single-stranded right-handed beta-helix, Pectin lyase-like"/>
    <property type="match status" value="1"/>
</dbReference>
<dbReference type="InterPro" id="IPR002022">
    <property type="entry name" value="Pec_lyase"/>
</dbReference>
<dbReference type="InterPro" id="IPR012334">
    <property type="entry name" value="Pectin_lyas_fold"/>
</dbReference>
<dbReference type="InterPro" id="IPR011050">
    <property type="entry name" value="Pectin_lyase_fold/virulence"/>
</dbReference>
<dbReference type="InterPro" id="IPR045032">
    <property type="entry name" value="PEL"/>
</dbReference>
<dbReference type="PANTHER" id="PTHR31683">
    <property type="entry name" value="PECTATE LYASE 18-RELATED"/>
    <property type="match status" value="1"/>
</dbReference>
<dbReference type="PANTHER" id="PTHR31683:SF18">
    <property type="entry name" value="PECTATE LYASE 21-RELATED"/>
    <property type="match status" value="1"/>
</dbReference>
<dbReference type="Pfam" id="PF00544">
    <property type="entry name" value="Pectate_lyase_4"/>
    <property type="match status" value="1"/>
</dbReference>
<dbReference type="SMART" id="SM00656">
    <property type="entry name" value="Amb_all"/>
    <property type="match status" value="1"/>
</dbReference>
<dbReference type="SUPFAM" id="SSF51126">
    <property type="entry name" value="Pectin lyase-like"/>
    <property type="match status" value="1"/>
</dbReference>
<reference evidence="6" key="1">
    <citation type="journal article" date="1999" name="Nature">
        <title>Evidence for lateral gene transfer between Archaea and Bacteria from genome sequence of Thermotoga maritima.</title>
        <authorList>
            <person name="Nelson K.E."/>
            <person name="Clayton R.A."/>
            <person name="Gill S.R."/>
            <person name="Gwinn M.L."/>
            <person name="Dodson R.J."/>
            <person name="Haft D.H."/>
            <person name="Hickey E.K."/>
            <person name="Peterson J.D."/>
            <person name="Nelson W.C."/>
            <person name="Ketchum K.A."/>
            <person name="McDonald L.A."/>
            <person name="Utterback T.R."/>
            <person name="Malek J.A."/>
            <person name="Linher K.D."/>
            <person name="Garrett M.M."/>
            <person name="Stewart A.M."/>
            <person name="Cotton M.D."/>
            <person name="Pratt M.S."/>
            <person name="Phillips C.A."/>
            <person name="Richardson D.L."/>
            <person name="Heidelberg J.F."/>
            <person name="Sutton G.G."/>
            <person name="Fleischmann R.D."/>
            <person name="Eisen J.A."/>
            <person name="White O."/>
            <person name="Salzberg S.L."/>
            <person name="Smith H.O."/>
            <person name="Venter J.C."/>
            <person name="Fraser C.M."/>
        </authorList>
    </citation>
    <scope>NUCLEOTIDE SEQUENCE [LARGE SCALE GENOMIC DNA]</scope>
    <source>
        <strain>ATCC 43589 / DSM 3109 / JCM 10099 / NBRC 100826 / MSB8</strain>
    </source>
</reference>
<reference evidence="5" key="2">
    <citation type="journal article" date="2003" name="Biochem. J.">
        <title>Molecular and biochemical characterization of the thermoactive family 1 pectate lyase from the hyperthermophilic bacterium Thermotoga maritima.</title>
        <authorList>
            <person name="Kluskens L.D."/>
            <person name="van Alebeek G.J."/>
            <person name="Voragen A.G."/>
            <person name="de Vos W.M."/>
            <person name="van der Oost J."/>
        </authorList>
    </citation>
    <scope>FUNCTION</scope>
    <scope>CATALYTIC ACTIVITY</scope>
    <scope>COFACTOR</scope>
    <scope>ACTIVITY REGULATION</scope>
    <scope>BIOPHYSICOCHEMICAL PROPERTIES</scope>
    <scope>SUBUNIT</scope>
    <scope>SUBCELLULAR LOCATION</scope>
    <source>
        <strain evidence="3">ATCC 43589 / DSM 3109 / JCM 10099 / NBRC 100826 / MSB8</strain>
    </source>
</reference>
<name>PTLY_THEMA</name>
<evidence type="ECO:0000250" key="1">
    <source>
        <dbReference type="UniProtKB" id="P39116"/>
    </source>
</evidence>
<evidence type="ECO:0000255" key="2"/>
<evidence type="ECO:0000269" key="3">
    <source>
    </source>
</evidence>
<evidence type="ECO:0000303" key="4">
    <source>
    </source>
</evidence>
<evidence type="ECO:0000305" key="5"/>
<evidence type="ECO:0000312" key="6">
    <source>
        <dbReference type="EMBL" id="AAD35518.1"/>
    </source>
</evidence>
<evidence type="ECO:0007829" key="7">
    <source>
        <dbReference type="PDB" id="3ZSC"/>
    </source>
</evidence>
<sequence>MLMRFSRVVSLVLLLVFTAVLTGAVKASLNDKPVGFASVPTADLPEGTVGGLGGEIVFVRTAEELEKYTTAEGKYVIVVDGTIVFEPKREIKVLSDKTIVGINDAKIVGGGLVIKDAQNVIIRNIHFEGFYMEDDPRGKKYDFDYINVENSHHIWIDHCTFVNGNDGAVDIKKYSNYITVSWCKFVDHDKVSLVGSSDKEDPEQAGQAYKVTYHHNYFKNCIQRMPRIRFGMAHVFNNFYSMGLRTGVSGNVFPIYGVASAMGAKVHVEGNYFMGYGAVMAEAGIAFLPTRIMGPVEGYLTLGEGDAKNEFYYCKEPEVRPVEEGKPALDPREYYDYTLDPVQDVPKIVVDGAGAGKLVFEELNTAQ</sequence>
<proteinExistence type="evidence at protein level"/>
<organism>
    <name type="scientific">Thermotoga maritima (strain ATCC 43589 / DSM 3109 / JCM 10099 / NBRC 100826 / MSB8)</name>
    <dbReference type="NCBI Taxonomy" id="243274"/>
    <lineage>
        <taxon>Bacteria</taxon>
        <taxon>Thermotogati</taxon>
        <taxon>Thermotogota</taxon>
        <taxon>Thermotogae</taxon>
        <taxon>Thermotogales</taxon>
        <taxon>Thermotogaceae</taxon>
        <taxon>Thermotoga</taxon>
    </lineage>
</organism>
<feature type="signal peptide" evidence="2">
    <location>
        <begin position="1"/>
        <end position="27"/>
    </location>
</feature>
<feature type="chain" id="PRO_0000405016" description="Pectate trisaccharide-lyase" evidence="2">
    <location>
        <begin position="28"/>
        <end position="367"/>
    </location>
</feature>
<feature type="repeat" description="PbH1 1" evidence="2">
    <location>
        <begin position="151"/>
        <end position="173"/>
    </location>
</feature>
<feature type="repeat" description="PbH1 2" evidence="2">
    <location>
        <begin position="263"/>
        <end position="289"/>
    </location>
</feature>
<feature type="active site" evidence="1">
    <location>
        <position position="224"/>
    </location>
</feature>
<feature type="binding site" evidence="1">
    <location>
        <position position="144"/>
    </location>
    <ligand>
        <name>Ca(2+)</name>
        <dbReference type="ChEBI" id="CHEBI:29108"/>
    </ligand>
</feature>
<feature type="binding site" evidence="1">
    <location>
        <position position="166"/>
    </location>
    <ligand>
        <name>Ca(2+)</name>
        <dbReference type="ChEBI" id="CHEBI:29108"/>
    </ligand>
</feature>
<feature type="binding site" evidence="1">
    <location>
        <position position="170"/>
    </location>
    <ligand>
        <name>Ca(2+)</name>
        <dbReference type="ChEBI" id="CHEBI:29108"/>
    </ligand>
</feature>
<feature type="helix" evidence="7">
    <location>
        <begin position="36"/>
        <end position="38"/>
    </location>
</feature>
<feature type="turn" evidence="7">
    <location>
        <begin position="50"/>
        <end position="53"/>
    </location>
</feature>
<feature type="strand" evidence="7">
    <location>
        <begin position="54"/>
        <end position="59"/>
    </location>
</feature>
<feature type="helix" evidence="7">
    <location>
        <begin position="62"/>
        <end position="69"/>
    </location>
</feature>
<feature type="strand" evidence="7">
    <location>
        <begin position="71"/>
        <end position="73"/>
    </location>
</feature>
<feature type="strand" evidence="7">
    <location>
        <begin position="75"/>
        <end position="93"/>
    </location>
</feature>
<feature type="strand" evidence="7">
    <location>
        <begin position="95"/>
        <end position="116"/>
    </location>
</feature>
<feature type="strand" evidence="7">
    <location>
        <begin position="118"/>
        <end position="124"/>
    </location>
</feature>
<feature type="strand" evidence="7">
    <location>
        <begin position="126"/>
        <end position="128"/>
    </location>
</feature>
<feature type="strand" evidence="7">
    <location>
        <begin position="145"/>
        <end position="150"/>
    </location>
</feature>
<feature type="strand" evidence="7">
    <location>
        <begin position="152"/>
        <end position="158"/>
    </location>
</feature>
<feature type="strand" evidence="7">
    <location>
        <begin position="160"/>
        <end position="163"/>
    </location>
</feature>
<feature type="strand" evidence="7">
    <location>
        <begin position="168"/>
        <end position="172"/>
    </location>
</feature>
<feature type="strand" evidence="7">
    <location>
        <begin position="176"/>
        <end position="182"/>
    </location>
</feature>
<feature type="strand" evidence="7">
    <location>
        <begin position="184"/>
        <end position="187"/>
    </location>
</feature>
<feature type="helix" evidence="7">
    <location>
        <begin position="202"/>
        <end position="207"/>
    </location>
</feature>
<feature type="strand" evidence="7">
    <location>
        <begin position="210"/>
        <end position="215"/>
    </location>
</feature>
<feature type="strand" evidence="7">
    <location>
        <begin position="217"/>
        <end position="220"/>
    </location>
</feature>
<feature type="strand" evidence="7">
    <location>
        <begin position="227"/>
        <end position="237"/>
    </location>
</feature>
<feature type="strand" evidence="7">
    <location>
        <begin position="239"/>
        <end position="241"/>
    </location>
</feature>
<feature type="strand" evidence="7">
    <location>
        <begin position="256"/>
        <end position="261"/>
    </location>
</feature>
<feature type="strand" evidence="7">
    <location>
        <begin position="265"/>
        <end position="270"/>
    </location>
</feature>
<feature type="strand" evidence="7">
    <location>
        <begin position="272"/>
        <end position="274"/>
    </location>
</feature>
<feature type="helix" evidence="7">
    <location>
        <begin position="278"/>
        <end position="282"/>
    </location>
</feature>
<feature type="strand" evidence="7">
    <location>
        <begin position="287"/>
        <end position="292"/>
    </location>
</feature>
<feature type="turn" evidence="7">
    <location>
        <begin position="294"/>
        <end position="296"/>
    </location>
</feature>
<feature type="strand" evidence="7">
    <location>
        <begin position="299"/>
        <end position="302"/>
    </location>
</feature>
<feature type="helix" evidence="7">
    <location>
        <begin position="305"/>
        <end position="307"/>
    </location>
</feature>
<feature type="strand" evidence="7">
    <location>
        <begin position="310"/>
        <end position="314"/>
    </location>
</feature>
<feature type="helix" evidence="7">
    <location>
        <begin position="331"/>
        <end position="333"/>
    </location>
</feature>
<feature type="helix" evidence="7">
    <location>
        <begin position="342"/>
        <end position="344"/>
    </location>
</feature>
<feature type="helix" evidence="7">
    <location>
        <begin position="345"/>
        <end position="352"/>
    </location>
</feature>
<keyword id="KW-0002">3D-structure</keyword>
<keyword id="KW-0106">Calcium</keyword>
<keyword id="KW-0119">Carbohydrate metabolism</keyword>
<keyword id="KW-0961">Cell wall biogenesis/degradation</keyword>
<keyword id="KW-0456">Lyase</keyword>
<keyword id="KW-0479">Metal-binding</keyword>
<keyword id="KW-0624">Polysaccharide degradation</keyword>
<keyword id="KW-1185">Reference proteome</keyword>
<keyword id="KW-0677">Repeat</keyword>
<keyword id="KW-0964">Secreted</keyword>
<keyword id="KW-0732">Signal</keyword>